<keyword id="KW-0066">ATP synthesis</keyword>
<keyword id="KW-0997">Cell inner membrane</keyword>
<keyword id="KW-1003">Cell membrane</keyword>
<keyword id="KW-0139">CF(1)</keyword>
<keyword id="KW-0375">Hydrogen ion transport</keyword>
<keyword id="KW-0406">Ion transport</keyword>
<keyword id="KW-0472">Membrane</keyword>
<keyword id="KW-0614">Plasmid</keyword>
<keyword id="KW-1185">Reference proteome</keyword>
<keyword id="KW-0813">Transport</keyword>
<protein>
    <recommendedName>
        <fullName evidence="1">ATP synthase epsilon chain 2</fullName>
    </recommendedName>
    <alternativeName>
        <fullName evidence="1">ATP synthase F1 sector epsilon subunit 2</fullName>
    </alternativeName>
    <alternativeName>
        <fullName evidence="1">F-ATPase epsilon subunit 2</fullName>
    </alternativeName>
</protein>
<organism>
    <name type="scientific">Cereibacter sphaeroides (strain ATCC 17023 / DSM 158 / JCM 6121 / CCUG 31486 / LMG 2827 / NBRC 12203 / NCIMB 8253 / ATH 2.4.1.)</name>
    <name type="common">Rhodobacter sphaeroides</name>
    <dbReference type="NCBI Taxonomy" id="272943"/>
    <lineage>
        <taxon>Bacteria</taxon>
        <taxon>Pseudomonadati</taxon>
        <taxon>Pseudomonadota</taxon>
        <taxon>Alphaproteobacteria</taxon>
        <taxon>Rhodobacterales</taxon>
        <taxon>Paracoccaceae</taxon>
        <taxon>Cereibacter</taxon>
    </lineage>
</organism>
<evidence type="ECO:0000255" key="1">
    <source>
        <dbReference type="HAMAP-Rule" id="MF_00530"/>
    </source>
</evidence>
<gene>
    <name evidence="1" type="primary">atpC2</name>
    <name type="ordered locus">RSP_3930</name>
</gene>
<sequence>MSLTLRVTTPLAAVLEEEGLASIRAEDASGGFGLLPGHVDLLTVIEAGVLRFRRPEGPWHFCAIRGGVLRATGGRLVTVACREAVPGEDLARLEAGLKRQAEAADQAARRARGEQVRLHANAIRSLMRHLDRAPGADLSGIVEAFE</sequence>
<feature type="chain" id="PRO_0000265873" description="ATP synthase epsilon chain 2">
    <location>
        <begin position="1"/>
        <end position="146"/>
    </location>
</feature>
<reference key="1">
    <citation type="submission" date="2005-10" db="EMBL/GenBank/DDBJ databases">
        <title>Finished sequence of plasmid A of Rhodobacter sphaeroides 2.4.1.</title>
        <authorList>
            <person name="Copeland A."/>
            <person name="Lucas S."/>
            <person name="Lapidus A."/>
            <person name="Barry K."/>
            <person name="Detter J.C."/>
            <person name="Glavina T."/>
            <person name="Hammon N."/>
            <person name="Israni S."/>
            <person name="Pitluck S."/>
            <person name="Richardson P."/>
            <person name="Mackenzie C."/>
            <person name="Choudhary M."/>
            <person name="Larimer F."/>
            <person name="Hauser L.J."/>
            <person name="Land M."/>
            <person name="Donohue T.J."/>
            <person name="Kaplan S."/>
        </authorList>
    </citation>
    <scope>NUCLEOTIDE SEQUENCE [LARGE SCALE GENOMIC DNA]</scope>
    <source>
        <strain>ATCC 17023 / DSM 158 / JCM 6121 / CCUG 31486 / LMG 2827 / NBRC 12203 / NCIMB 8253 / ATH 2.4.1.</strain>
    </source>
</reference>
<accession>Q3HKH5</accession>
<name>ATPE2_CERS4</name>
<geneLocation type="plasmid">
    <name>pRS241a</name>
</geneLocation>
<proteinExistence type="inferred from homology"/>
<comment type="function">
    <text evidence="1">Produces ATP from ADP in the presence of a proton gradient across the membrane.</text>
</comment>
<comment type="subunit">
    <text>F-type ATPases have 2 components, CF(1) - the catalytic core - and CF(0) - the membrane proton channel. CF(1) has five subunits: alpha(3), beta(3), gamma(1), delta(1), epsilon(1). CF(0) has three main subunits: a, b and c.</text>
</comment>
<comment type="subcellular location">
    <subcellularLocation>
        <location evidence="1">Cell inner membrane</location>
        <topology evidence="1">Peripheral membrane protein</topology>
    </subcellularLocation>
</comment>
<comment type="similarity">
    <text evidence="1">Belongs to the ATPase epsilon chain family.</text>
</comment>
<dbReference type="EMBL" id="DQ232586">
    <property type="protein sequence ID" value="ABA81769.1"/>
    <property type="molecule type" value="Genomic_DNA"/>
</dbReference>
<dbReference type="RefSeq" id="WP_011836235.1">
    <property type="nucleotide sequence ID" value="NC_009007.1"/>
</dbReference>
<dbReference type="RefSeq" id="YP_001033874.1">
    <property type="nucleotide sequence ID" value="NC_009007.1"/>
</dbReference>
<dbReference type="SMR" id="Q3HKH5"/>
<dbReference type="EnsemblBacteria" id="ABA81769">
    <property type="protein sequence ID" value="ABA81769"/>
    <property type="gene ID" value="RSP_3930"/>
</dbReference>
<dbReference type="GeneID" id="4796447"/>
<dbReference type="KEGG" id="rsp:RSP_3930"/>
<dbReference type="PATRIC" id="fig|272943.9.peg.4347"/>
<dbReference type="OrthoDB" id="272739at2"/>
<dbReference type="Proteomes" id="UP000002703">
    <property type="component" value="Plasmid A"/>
</dbReference>
<dbReference type="GO" id="GO:0005886">
    <property type="term" value="C:plasma membrane"/>
    <property type="evidence" value="ECO:0007669"/>
    <property type="project" value="UniProtKB-SubCell"/>
</dbReference>
<dbReference type="GO" id="GO:0045259">
    <property type="term" value="C:proton-transporting ATP synthase complex"/>
    <property type="evidence" value="ECO:0007669"/>
    <property type="project" value="UniProtKB-KW"/>
</dbReference>
<dbReference type="GO" id="GO:0005524">
    <property type="term" value="F:ATP binding"/>
    <property type="evidence" value="ECO:0007669"/>
    <property type="project" value="UniProtKB-UniRule"/>
</dbReference>
<dbReference type="GO" id="GO:0046933">
    <property type="term" value="F:proton-transporting ATP synthase activity, rotational mechanism"/>
    <property type="evidence" value="ECO:0007669"/>
    <property type="project" value="UniProtKB-UniRule"/>
</dbReference>
<dbReference type="CDD" id="cd12152">
    <property type="entry name" value="F1-ATPase_delta"/>
    <property type="match status" value="1"/>
</dbReference>
<dbReference type="Gene3D" id="2.60.15.10">
    <property type="entry name" value="F0F1 ATP synthase delta/epsilon subunit, N-terminal"/>
    <property type="match status" value="1"/>
</dbReference>
<dbReference type="HAMAP" id="MF_00530">
    <property type="entry name" value="ATP_synth_epsil_bac"/>
    <property type="match status" value="1"/>
</dbReference>
<dbReference type="InterPro" id="IPR024037">
    <property type="entry name" value="Alt_ATP_synth_F1_esu"/>
</dbReference>
<dbReference type="InterPro" id="IPR001469">
    <property type="entry name" value="ATP_synth_F1_dsu/esu"/>
</dbReference>
<dbReference type="InterPro" id="IPR020546">
    <property type="entry name" value="ATP_synth_F1_dsu/esu_N"/>
</dbReference>
<dbReference type="InterPro" id="IPR036771">
    <property type="entry name" value="ATPsynth_dsu/esu_N"/>
</dbReference>
<dbReference type="NCBIfam" id="TIGR03166">
    <property type="entry name" value="alt_F1F0_F1_eps"/>
    <property type="match status" value="1"/>
</dbReference>
<dbReference type="NCBIfam" id="NF009981">
    <property type="entry name" value="PRK13447.1"/>
    <property type="match status" value="1"/>
</dbReference>
<dbReference type="Pfam" id="PF02823">
    <property type="entry name" value="ATP-synt_DE_N"/>
    <property type="match status" value="1"/>
</dbReference>
<dbReference type="SUPFAM" id="SSF51344">
    <property type="entry name" value="Epsilon subunit of F1F0-ATP synthase N-terminal domain"/>
    <property type="match status" value="1"/>
</dbReference>